<accession>Q83G00</accession>
<sequence length="178" mass="18817">MSRVGKLPIEIPVGVEVCVNGRTVSITGPKGSLYLDIAEQIGVSVSDGKVLVSRSDDSRTARALHGLTRALIANNVHGVLHGYTKTLEIVGTGYRVSKKGENLELALGFSHPVFVDPVPGVSFGVEGNSKIIVSGIDKQAVGEAAASIRKLSKPEPYKGKGIRYSDEIVRRKVGKAGK</sequence>
<reference key="1">
    <citation type="journal article" date="2003" name="Genome Res.">
        <title>Tropheryma whipplei twist: a human pathogenic Actinobacteria with a reduced genome.</title>
        <authorList>
            <person name="Raoult D."/>
            <person name="Ogata H."/>
            <person name="Audic S."/>
            <person name="Robert C."/>
            <person name="Suhre K."/>
            <person name="Drancourt M."/>
            <person name="Claverie J.-M."/>
        </authorList>
    </citation>
    <scope>NUCLEOTIDE SEQUENCE [LARGE SCALE GENOMIC DNA]</scope>
    <source>
        <strain>Twist</strain>
    </source>
</reference>
<feature type="chain" id="PRO_0000260973" description="Large ribosomal subunit protein uL6">
    <location>
        <begin position="1"/>
        <end position="178"/>
    </location>
</feature>
<proteinExistence type="inferred from homology"/>
<comment type="function">
    <text evidence="1">This protein binds to the 23S rRNA, and is important in its secondary structure. It is located near the subunit interface in the base of the L7/L12 stalk, and near the tRNA binding site of the peptidyltransferase center.</text>
</comment>
<comment type="subunit">
    <text evidence="1">Part of the 50S ribosomal subunit.</text>
</comment>
<comment type="similarity">
    <text evidence="1">Belongs to the universal ribosomal protein uL6 family.</text>
</comment>
<comment type="sequence caution" evidence="2">
    <conflict type="erroneous initiation">
        <sequence resource="EMBL-CDS" id="AAO44637"/>
    </conflict>
</comment>
<gene>
    <name evidence="1" type="primary">rplF</name>
    <name type="ordered locus">TWT_540</name>
</gene>
<name>RL6_TROWT</name>
<organism>
    <name type="scientific">Tropheryma whipplei (strain Twist)</name>
    <name type="common">Whipple's bacillus</name>
    <dbReference type="NCBI Taxonomy" id="203267"/>
    <lineage>
        <taxon>Bacteria</taxon>
        <taxon>Bacillati</taxon>
        <taxon>Actinomycetota</taxon>
        <taxon>Actinomycetes</taxon>
        <taxon>Micrococcales</taxon>
        <taxon>Tropherymataceae</taxon>
        <taxon>Tropheryma</taxon>
    </lineage>
</organism>
<keyword id="KW-1185">Reference proteome</keyword>
<keyword id="KW-0687">Ribonucleoprotein</keyword>
<keyword id="KW-0689">Ribosomal protein</keyword>
<keyword id="KW-0694">RNA-binding</keyword>
<keyword id="KW-0699">rRNA-binding</keyword>
<dbReference type="EMBL" id="AE014184">
    <property type="protein sequence ID" value="AAO44637.1"/>
    <property type="status" value="ALT_INIT"/>
    <property type="molecule type" value="Genomic_DNA"/>
</dbReference>
<dbReference type="RefSeq" id="WP_011096179.1">
    <property type="nucleotide sequence ID" value="NC_004572.3"/>
</dbReference>
<dbReference type="SMR" id="Q83G00"/>
<dbReference type="STRING" id="203267.TWT_540"/>
<dbReference type="GeneID" id="67387997"/>
<dbReference type="KEGG" id="twh:TWT_540"/>
<dbReference type="eggNOG" id="COG0097">
    <property type="taxonomic scope" value="Bacteria"/>
</dbReference>
<dbReference type="HOGENOM" id="CLU_065464_1_2_11"/>
<dbReference type="OrthoDB" id="9805007at2"/>
<dbReference type="Proteomes" id="UP000002200">
    <property type="component" value="Chromosome"/>
</dbReference>
<dbReference type="GO" id="GO:0022625">
    <property type="term" value="C:cytosolic large ribosomal subunit"/>
    <property type="evidence" value="ECO:0007669"/>
    <property type="project" value="TreeGrafter"/>
</dbReference>
<dbReference type="GO" id="GO:0019843">
    <property type="term" value="F:rRNA binding"/>
    <property type="evidence" value="ECO:0007669"/>
    <property type="project" value="UniProtKB-UniRule"/>
</dbReference>
<dbReference type="GO" id="GO:0003735">
    <property type="term" value="F:structural constituent of ribosome"/>
    <property type="evidence" value="ECO:0007669"/>
    <property type="project" value="InterPro"/>
</dbReference>
<dbReference type="GO" id="GO:0002181">
    <property type="term" value="P:cytoplasmic translation"/>
    <property type="evidence" value="ECO:0007669"/>
    <property type="project" value="TreeGrafter"/>
</dbReference>
<dbReference type="FunFam" id="3.90.930.12:FF:000001">
    <property type="entry name" value="50S ribosomal protein L6"/>
    <property type="match status" value="1"/>
</dbReference>
<dbReference type="FunFam" id="3.90.930.12:FF:000002">
    <property type="entry name" value="50S ribosomal protein L6"/>
    <property type="match status" value="1"/>
</dbReference>
<dbReference type="Gene3D" id="3.90.930.12">
    <property type="entry name" value="Ribosomal protein L6, alpha-beta domain"/>
    <property type="match status" value="2"/>
</dbReference>
<dbReference type="HAMAP" id="MF_01365_B">
    <property type="entry name" value="Ribosomal_uL6_B"/>
    <property type="match status" value="1"/>
</dbReference>
<dbReference type="InterPro" id="IPR000702">
    <property type="entry name" value="Ribosomal_uL6-like"/>
</dbReference>
<dbReference type="InterPro" id="IPR036789">
    <property type="entry name" value="Ribosomal_uL6-like_a/b-dom_sf"/>
</dbReference>
<dbReference type="InterPro" id="IPR020040">
    <property type="entry name" value="Ribosomal_uL6_a/b-dom"/>
</dbReference>
<dbReference type="InterPro" id="IPR019906">
    <property type="entry name" value="Ribosomal_uL6_bac-type"/>
</dbReference>
<dbReference type="InterPro" id="IPR002358">
    <property type="entry name" value="Ribosomal_uL6_CS"/>
</dbReference>
<dbReference type="NCBIfam" id="TIGR03654">
    <property type="entry name" value="L6_bact"/>
    <property type="match status" value="1"/>
</dbReference>
<dbReference type="PANTHER" id="PTHR11655">
    <property type="entry name" value="60S/50S RIBOSOMAL PROTEIN L6/L9"/>
    <property type="match status" value="1"/>
</dbReference>
<dbReference type="PANTHER" id="PTHR11655:SF14">
    <property type="entry name" value="LARGE RIBOSOMAL SUBUNIT PROTEIN UL6M"/>
    <property type="match status" value="1"/>
</dbReference>
<dbReference type="Pfam" id="PF00347">
    <property type="entry name" value="Ribosomal_L6"/>
    <property type="match status" value="2"/>
</dbReference>
<dbReference type="PIRSF" id="PIRSF002162">
    <property type="entry name" value="Ribosomal_L6"/>
    <property type="match status" value="1"/>
</dbReference>
<dbReference type="PRINTS" id="PR00059">
    <property type="entry name" value="RIBOSOMALL6"/>
</dbReference>
<dbReference type="SUPFAM" id="SSF56053">
    <property type="entry name" value="Ribosomal protein L6"/>
    <property type="match status" value="2"/>
</dbReference>
<dbReference type="PROSITE" id="PS00525">
    <property type="entry name" value="RIBOSOMAL_L6_1"/>
    <property type="match status" value="1"/>
</dbReference>
<protein>
    <recommendedName>
        <fullName evidence="1">Large ribosomal subunit protein uL6</fullName>
    </recommendedName>
    <alternativeName>
        <fullName evidence="2">50S ribosomal protein L6</fullName>
    </alternativeName>
</protein>
<evidence type="ECO:0000255" key="1">
    <source>
        <dbReference type="HAMAP-Rule" id="MF_01365"/>
    </source>
</evidence>
<evidence type="ECO:0000305" key="2"/>